<gene>
    <name evidence="1" type="primary">nuoD</name>
    <name type="ordered locus">H16_A1053</name>
</gene>
<evidence type="ECO:0000255" key="1">
    <source>
        <dbReference type="HAMAP-Rule" id="MF_01358"/>
    </source>
</evidence>
<reference key="1">
    <citation type="journal article" date="2006" name="Nat. Biotechnol.">
        <title>Genome sequence of the bioplastic-producing 'Knallgas' bacterium Ralstonia eutropha H16.</title>
        <authorList>
            <person name="Pohlmann A."/>
            <person name="Fricke W.F."/>
            <person name="Reinecke F."/>
            <person name="Kusian B."/>
            <person name="Liesegang H."/>
            <person name="Cramm R."/>
            <person name="Eitinger T."/>
            <person name="Ewering C."/>
            <person name="Poetter M."/>
            <person name="Schwartz E."/>
            <person name="Strittmatter A."/>
            <person name="Voss I."/>
            <person name="Gottschalk G."/>
            <person name="Steinbuechel A."/>
            <person name="Friedrich B."/>
            <person name="Bowien B."/>
        </authorList>
    </citation>
    <scope>NUCLEOTIDE SEQUENCE [LARGE SCALE GENOMIC DNA]</scope>
    <source>
        <strain>ATCC 17699 / DSM 428 / KCTC 22496 / NCIMB 10442 / H16 / Stanier 337</strain>
    </source>
</reference>
<feature type="chain" id="PRO_0000371917" description="NADH-quinone oxidoreductase subunit D">
    <location>
        <begin position="1"/>
        <end position="417"/>
    </location>
</feature>
<accession>Q0KCS7</accession>
<keyword id="KW-0997">Cell inner membrane</keyword>
<keyword id="KW-1003">Cell membrane</keyword>
<keyword id="KW-0472">Membrane</keyword>
<keyword id="KW-0520">NAD</keyword>
<keyword id="KW-0874">Quinone</keyword>
<keyword id="KW-1185">Reference proteome</keyword>
<keyword id="KW-1278">Translocase</keyword>
<keyword id="KW-0813">Transport</keyword>
<keyword id="KW-0830">Ubiquinone</keyword>
<protein>
    <recommendedName>
        <fullName evidence="1">NADH-quinone oxidoreductase subunit D</fullName>
        <ecNumber evidence="1">7.1.1.-</ecNumber>
    </recommendedName>
    <alternativeName>
        <fullName evidence="1">NADH dehydrogenase I subunit D</fullName>
    </alternativeName>
    <alternativeName>
        <fullName evidence="1">NDH-1 subunit D</fullName>
    </alternativeName>
</protein>
<organism>
    <name type="scientific">Cupriavidus necator (strain ATCC 17699 / DSM 428 / KCTC 22496 / NCIMB 10442 / H16 / Stanier 337)</name>
    <name type="common">Ralstonia eutropha</name>
    <dbReference type="NCBI Taxonomy" id="381666"/>
    <lineage>
        <taxon>Bacteria</taxon>
        <taxon>Pseudomonadati</taxon>
        <taxon>Pseudomonadota</taxon>
        <taxon>Betaproteobacteria</taxon>
        <taxon>Burkholderiales</taxon>
        <taxon>Burkholderiaceae</taxon>
        <taxon>Cupriavidus</taxon>
    </lineage>
</organism>
<comment type="function">
    <text evidence="1">NDH-1 shuttles electrons from NADH, via FMN and iron-sulfur (Fe-S) centers, to quinones in the respiratory chain. The immediate electron acceptor for the enzyme in this species is believed to be ubiquinone. Couples the redox reaction to proton translocation (for every two electrons transferred, four hydrogen ions are translocated across the cytoplasmic membrane), and thus conserves the redox energy in a proton gradient.</text>
</comment>
<comment type="catalytic activity">
    <reaction evidence="1">
        <text>a quinone + NADH + 5 H(+)(in) = a quinol + NAD(+) + 4 H(+)(out)</text>
        <dbReference type="Rhea" id="RHEA:57888"/>
        <dbReference type="ChEBI" id="CHEBI:15378"/>
        <dbReference type="ChEBI" id="CHEBI:24646"/>
        <dbReference type="ChEBI" id="CHEBI:57540"/>
        <dbReference type="ChEBI" id="CHEBI:57945"/>
        <dbReference type="ChEBI" id="CHEBI:132124"/>
    </reaction>
</comment>
<comment type="subunit">
    <text evidence="1">NDH-1 is composed of 14 different subunits. Subunits NuoB, C, D, E, F, and G constitute the peripheral sector of the complex.</text>
</comment>
<comment type="subcellular location">
    <subcellularLocation>
        <location evidence="1">Cell inner membrane</location>
        <topology evidence="1">Peripheral membrane protein</topology>
        <orientation evidence="1">Cytoplasmic side</orientation>
    </subcellularLocation>
</comment>
<comment type="similarity">
    <text evidence="1">Belongs to the complex I 49 kDa subunit family.</text>
</comment>
<proteinExistence type="inferred from homology"/>
<dbReference type="EC" id="7.1.1.-" evidence="1"/>
<dbReference type="EMBL" id="AM260479">
    <property type="protein sequence ID" value="CAJ92194.1"/>
    <property type="molecule type" value="Genomic_DNA"/>
</dbReference>
<dbReference type="RefSeq" id="WP_010809129.1">
    <property type="nucleotide sequence ID" value="NZ_CP039287.1"/>
</dbReference>
<dbReference type="SMR" id="Q0KCS7"/>
<dbReference type="STRING" id="381666.H16_A1053"/>
<dbReference type="KEGG" id="reh:H16_A1053"/>
<dbReference type="eggNOG" id="COG0649">
    <property type="taxonomic scope" value="Bacteria"/>
</dbReference>
<dbReference type="HOGENOM" id="CLU_015134_1_1_4"/>
<dbReference type="OrthoDB" id="9801496at2"/>
<dbReference type="Proteomes" id="UP000008210">
    <property type="component" value="Chromosome 1"/>
</dbReference>
<dbReference type="GO" id="GO:0005886">
    <property type="term" value="C:plasma membrane"/>
    <property type="evidence" value="ECO:0007669"/>
    <property type="project" value="UniProtKB-SubCell"/>
</dbReference>
<dbReference type="GO" id="GO:0051287">
    <property type="term" value="F:NAD binding"/>
    <property type="evidence" value="ECO:0007669"/>
    <property type="project" value="InterPro"/>
</dbReference>
<dbReference type="GO" id="GO:0050136">
    <property type="term" value="F:NADH:ubiquinone reductase (non-electrogenic) activity"/>
    <property type="evidence" value="ECO:0007669"/>
    <property type="project" value="UniProtKB-UniRule"/>
</dbReference>
<dbReference type="GO" id="GO:0048038">
    <property type="term" value="F:quinone binding"/>
    <property type="evidence" value="ECO:0007669"/>
    <property type="project" value="UniProtKB-KW"/>
</dbReference>
<dbReference type="FunFam" id="1.10.645.10:FF:000005">
    <property type="entry name" value="NADH-quinone oxidoreductase subunit D"/>
    <property type="match status" value="1"/>
</dbReference>
<dbReference type="Gene3D" id="1.10.645.10">
    <property type="entry name" value="Cytochrome-c3 Hydrogenase, chain B"/>
    <property type="match status" value="1"/>
</dbReference>
<dbReference type="HAMAP" id="MF_01358">
    <property type="entry name" value="NDH1_NuoD"/>
    <property type="match status" value="1"/>
</dbReference>
<dbReference type="InterPro" id="IPR001135">
    <property type="entry name" value="NADH_Q_OxRdtase_suD"/>
</dbReference>
<dbReference type="InterPro" id="IPR014029">
    <property type="entry name" value="NADH_UbQ_OxRdtase_49kDa_CS"/>
</dbReference>
<dbReference type="InterPro" id="IPR022885">
    <property type="entry name" value="NDH1_su_D/H"/>
</dbReference>
<dbReference type="InterPro" id="IPR029014">
    <property type="entry name" value="NiFe-Hase_large"/>
</dbReference>
<dbReference type="NCBIfam" id="TIGR01962">
    <property type="entry name" value="NuoD"/>
    <property type="match status" value="1"/>
</dbReference>
<dbReference type="NCBIfam" id="NF004739">
    <property type="entry name" value="PRK06075.1"/>
    <property type="match status" value="1"/>
</dbReference>
<dbReference type="PANTHER" id="PTHR11993:SF10">
    <property type="entry name" value="NADH DEHYDROGENASE [UBIQUINONE] IRON-SULFUR PROTEIN 2, MITOCHONDRIAL"/>
    <property type="match status" value="1"/>
</dbReference>
<dbReference type="PANTHER" id="PTHR11993">
    <property type="entry name" value="NADH-UBIQUINONE OXIDOREDUCTASE 49 KDA SUBUNIT"/>
    <property type="match status" value="1"/>
</dbReference>
<dbReference type="Pfam" id="PF00346">
    <property type="entry name" value="Complex1_49kDa"/>
    <property type="match status" value="1"/>
</dbReference>
<dbReference type="SUPFAM" id="SSF56762">
    <property type="entry name" value="HydB/Nqo4-like"/>
    <property type="match status" value="1"/>
</dbReference>
<dbReference type="PROSITE" id="PS00535">
    <property type="entry name" value="COMPLEX1_49K"/>
    <property type="match status" value="1"/>
</dbReference>
<name>NUOD_CUPNH</name>
<sequence>MADIKNYTLNFGPQHPAAHGVLRLVLELDGEVIQRADPHIGLLHRATEKLAEQKTWIQSVPYMDRLDYVSMMVNEHAYVMAIERLLGLEVPVRAQYIRVMFDEITRLLNHLMWIGSHALDVGAMAVFLYAFREREDMFDMYEAVSGARMHAAYYRPGGVYRDLPDTMPQYRASKVHNERAIKAMNEARSGSLLDFIEDFTNRFPKYVDEYETLLTDNRIWKQRLVDIGVVSPERALQMGFTGPMLRGSGIEWDLRKKQPYEVYDKLDFDVPVGVGGDCYARYLVRVEEMRQSNRIIRQCVEWLRRNPGPVITDNHKVAPPSRVDMKSNMEELIHHFKLFTEGMHVPEGEAYAAVEHPKGEFGIYAISDGANKPYRLKIRAPGFPHLAALDEMAKGHMIADAVTIIGTQDIVFGEIDR</sequence>